<dbReference type="EMBL" id="D14162">
    <property type="protein sequence ID" value="BAA03207.1"/>
    <property type="molecule type" value="Genomic_DNA"/>
</dbReference>
<dbReference type="EMBL" id="AF331925">
    <property type="protein sequence ID" value="AAK18191.1"/>
    <property type="molecule type" value="Genomic_DNA"/>
</dbReference>
<dbReference type="EMBL" id="BA000036">
    <property type="protein sequence ID" value="BAB97948.1"/>
    <property type="molecule type" value="Genomic_DNA"/>
</dbReference>
<dbReference type="EMBL" id="BX927149">
    <property type="protein sequence ID" value="CAF19262.1"/>
    <property type="molecule type" value="Genomic_DNA"/>
</dbReference>
<dbReference type="PIR" id="I40340">
    <property type="entry name" value="I40340"/>
</dbReference>
<dbReference type="RefSeq" id="NP_599793.1">
    <property type="nucleotide sequence ID" value="NC_003450.3"/>
</dbReference>
<dbReference type="RefSeq" id="WP_003854402.1">
    <property type="nucleotide sequence ID" value="NC_006958.1"/>
</dbReference>
<dbReference type="SMR" id="P38376"/>
<dbReference type="STRING" id="196627.cg0647"/>
<dbReference type="GeneID" id="1018561"/>
<dbReference type="KEGG" id="cgb:cg0647"/>
<dbReference type="KEGG" id="cgl:Cgl0555"/>
<dbReference type="PATRIC" id="fig|196627.13.peg.548"/>
<dbReference type="eggNOG" id="COG0201">
    <property type="taxonomic scope" value="Bacteria"/>
</dbReference>
<dbReference type="HOGENOM" id="CLU_030313_0_0_11"/>
<dbReference type="OrthoDB" id="9809248at2"/>
<dbReference type="BioCyc" id="CORYNE:G18NG-10117-MONOMER"/>
<dbReference type="Proteomes" id="UP000000582">
    <property type="component" value="Chromosome"/>
</dbReference>
<dbReference type="Proteomes" id="UP000001009">
    <property type="component" value="Chromosome"/>
</dbReference>
<dbReference type="GO" id="GO:0005886">
    <property type="term" value="C:plasma membrane"/>
    <property type="evidence" value="ECO:0007669"/>
    <property type="project" value="UniProtKB-SubCell"/>
</dbReference>
<dbReference type="GO" id="GO:0065002">
    <property type="term" value="P:intracellular protein transmembrane transport"/>
    <property type="evidence" value="ECO:0007669"/>
    <property type="project" value="UniProtKB-UniRule"/>
</dbReference>
<dbReference type="GO" id="GO:0006605">
    <property type="term" value="P:protein targeting"/>
    <property type="evidence" value="ECO:0007669"/>
    <property type="project" value="UniProtKB-UniRule"/>
</dbReference>
<dbReference type="GO" id="GO:0043952">
    <property type="term" value="P:protein transport by the Sec complex"/>
    <property type="evidence" value="ECO:0007669"/>
    <property type="project" value="UniProtKB-UniRule"/>
</dbReference>
<dbReference type="FunFam" id="1.10.3370.10:FF:000001">
    <property type="entry name" value="Preprotein translocase subunit SecY"/>
    <property type="match status" value="1"/>
</dbReference>
<dbReference type="Gene3D" id="1.10.3370.10">
    <property type="entry name" value="SecY subunit domain"/>
    <property type="match status" value="1"/>
</dbReference>
<dbReference type="HAMAP" id="MF_01465">
    <property type="entry name" value="SecY"/>
    <property type="match status" value="1"/>
</dbReference>
<dbReference type="InterPro" id="IPR026593">
    <property type="entry name" value="SecY"/>
</dbReference>
<dbReference type="InterPro" id="IPR002208">
    <property type="entry name" value="SecY/SEC61-alpha"/>
</dbReference>
<dbReference type="InterPro" id="IPR030659">
    <property type="entry name" value="SecY_CS"/>
</dbReference>
<dbReference type="InterPro" id="IPR023201">
    <property type="entry name" value="SecY_dom_sf"/>
</dbReference>
<dbReference type="NCBIfam" id="TIGR00967">
    <property type="entry name" value="3a0501s007"/>
    <property type="match status" value="1"/>
</dbReference>
<dbReference type="PANTHER" id="PTHR10906">
    <property type="entry name" value="SECY/SEC61-ALPHA FAMILY MEMBER"/>
    <property type="match status" value="1"/>
</dbReference>
<dbReference type="Pfam" id="PF00344">
    <property type="entry name" value="SecY"/>
    <property type="match status" value="1"/>
</dbReference>
<dbReference type="PIRSF" id="PIRSF004557">
    <property type="entry name" value="SecY"/>
    <property type="match status" value="1"/>
</dbReference>
<dbReference type="PRINTS" id="PR00303">
    <property type="entry name" value="SECYTRNLCASE"/>
</dbReference>
<dbReference type="SUPFAM" id="SSF103491">
    <property type="entry name" value="Preprotein translocase SecY subunit"/>
    <property type="match status" value="1"/>
</dbReference>
<dbReference type="PROSITE" id="PS00755">
    <property type="entry name" value="SECY_1"/>
    <property type="match status" value="1"/>
</dbReference>
<dbReference type="PROSITE" id="PS00756">
    <property type="entry name" value="SECY_2"/>
    <property type="match status" value="1"/>
</dbReference>
<reference key="1">
    <citation type="journal article" date="1994" name="Gene">
        <title>Cloning and sequencing of the secY homolog from Coryneform bacteria.</title>
        <authorList>
            <person name="Kobayashi M."/>
            <person name="Fugono N."/>
            <person name="Asai Y."/>
            <person name="Inui M."/>
            <person name="Vertes A.A."/>
            <person name="Kurusu Y."/>
            <person name="Yukawa H."/>
        </authorList>
    </citation>
    <scope>NUCLEOTIDE SEQUENCE [GENOMIC DNA]</scope>
    <source>
        <strain>MJ233</strain>
    </source>
</reference>
<reference key="2">
    <citation type="submission" date="2000-12" db="EMBL/GenBank/DDBJ databases">
        <title>The role of Corynebacterium glutamicum secretion genes secD, secF and secG in transporting the Streptomyces griseus alpha-amylase.</title>
        <authorList>
            <person name="Berens S."/>
            <person name="Kalinowski J."/>
            <person name="Puhler A."/>
        </authorList>
    </citation>
    <scope>NUCLEOTIDE SEQUENCE [GENOMIC DNA]</scope>
</reference>
<reference key="3">
    <citation type="journal article" date="2003" name="Appl. Microbiol. Biotechnol.">
        <title>The Corynebacterium glutamicum genome: features and impacts on biotechnological processes.</title>
        <authorList>
            <person name="Ikeda M."/>
            <person name="Nakagawa S."/>
        </authorList>
    </citation>
    <scope>NUCLEOTIDE SEQUENCE [LARGE SCALE GENOMIC DNA]</scope>
    <source>
        <strain>ATCC 13032 / DSM 20300 / JCM 1318 / BCRC 11384 / CCUG 27702 / LMG 3730 / NBRC 12168 / NCIMB 10025 / NRRL B-2784 / 534</strain>
    </source>
</reference>
<reference key="4">
    <citation type="journal article" date="2003" name="J. Biotechnol.">
        <title>The complete Corynebacterium glutamicum ATCC 13032 genome sequence and its impact on the production of L-aspartate-derived amino acids and vitamins.</title>
        <authorList>
            <person name="Kalinowski J."/>
            <person name="Bathe B."/>
            <person name="Bartels D."/>
            <person name="Bischoff N."/>
            <person name="Bott M."/>
            <person name="Burkovski A."/>
            <person name="Dusch N."/>
            <person name="Eggeling L."/>
            <person name="Eikmanns B.J."/>
            <person name="Gaigalat L."/>
            <person name="Goesmann A."/>
            <person name="Hartmann M."/>
            <person name="Huthmacher K."/>
            <person name="Kraemer R."/>
            <person name="Linke B."/>
            <person name="McHardy A.C."/>
            <person name="Meyer F."/>
            <person name="Moeckel B."/>
            <person name="Pfefferle W."/>
            <person name="Puehler A."/>
            <person name="Rey D.A."/>
            <person name="Rueckert C."/>
            <person name="Rupp O."/>
            <person name="Sahm H."/>
            <person name="Wendisch V.F."/>
            <person name="Wiegraebe I."/>
            <person name="Tauch A."/>
        </authorList>
    </citation>
    <scope>NUCLEOTIDE SEQUENCE [LARGE SCALE GENOMIC DNA]</scope>
    <source>
        <strain>ATCC 13032 / DSM 20300 / JCM 1318 / BCRC 11384 / CCUG 27702 / LMG 3730 / NBRC 12168 / NCIMB 10025 / NRRL B-2784 / 534</strain>
    </source>
</reference>
<name>SECY_CORGL</name>
<comment type="function">
    <text evidence="1">The central subunit of the protein translocation channel SecYEG. Consists of two halves formed by TMs 1-5 and 6-10. These two domains form a lateral gate at the front which open onto the bilayer between TMs 2 and 7, and are clamped together by SecE at the back. The channel is closed by both a pore ring composed of hydrophobic SecY resides and a short helix (helix 2A) on the extracellular side of the membrane which forms a plug. The plug probably moves laterally to allow the channel to open. The ring and the pore may move independently.</text>
</comment>
<comment type="subunit">
    <text evidence="1">Component of the Sec protein translocase complex. Heterotrimer consisting of SecY, SecE and SecG subunits. The heterotrimers can form oligomers, although 1 heterotrimer is thought to be able to translocate proteins. Interacts with the ribosome. Interacts with SecDF, and other proteins may be involved. Interacts with SecA.</text>
</comment>
<comment type="subcellular location">
    <subcellularLocation>
        <location evidence="1">Cell membrane</location>
        <topology evidence="1">Multi-pass membrane protein</topology>
    </subcellularLocation>
</comment>
<comment type="similarity">
    <text evidence="1">Belongs to the SecY/SEC61-alpha family.</text>
</comment>
<sequence>MSAIIQAFKDADLRKKIFFTIAMIVLYRIGAQIPSPGVDYATISGRLRDLTQDQSSVYSLINLFSGGALLQLSIFAIGIMPYITASIIVQLLTVVIPHFEELKKEGQSGQAKMMQYTRYLTVALALLQSSGIVALADREQLLGAGIRVLSADRNFFDLIVLVITMTAGAVLVMWMGELITEKGVGNGMSLLIFAGIATRLPTDGMNILGNSGGVVFAVVLASVLILVIGVVFVEQGQRRIPVQYAKRMVGRRQYGGSSTYLPLKVNQAGVIPVIFASSLIYMPVLITQIVNSGSLEVSDNWWQRNIIAHLQTPSSWQYIVLYFALTIFFSYFYVSVQYDPAEQAENMKKYGGFIPGIRPGRPTAEYLGFVMNRLLFVGSLYLAVIAVLPNIMLDLGVDAGSAGATPFGGTAILILVSVALTTVKQIESQLLQSNYEGLLK</sequence>
<protein>
    <recommendedName>
        <fullName evidence="1">Protein translocase subunit SecY</fullName>
    </recommendedName>
</protein>
<evidence type="ECO:0000255" key="1">
    <source>
        <dbReference type="HAMAP-Rule" id="MF_01465"/>
    </source>
</evidence>
<gene>
    <name evidence="1" type="primary">secY</name>
    <name type="ordered locus">Cgl0555</name>
    <name type="ordered locus">cg0647</name>
</gene>
<proteinExistence type="inferred from homology"/>
<accession>P38376</accession>
<organism>
    <name type="scientific">Corynebacterium glutamicum (strain ATCC 13032 / DSM 20300 / JCM 1318 / BCRC 11384 / CCUG 27702 / LMG 3730 / NBRC 12168 / NCIMB 10025 / NRRL B-2784 / 534)</name>
    <dbReference type="NCBI Taxonomy" id="196627"/>
    <lineage>
        <taxon>Bacteria</taxon>
        <taxon>Bacillati</taxon>
        <taxon>Actinomycetota</taxon>
        <taxon>Actinomycetes</taxon>
        <taxon>Mycobacteriales</taxon>
        <taxon>Corynebacteriaceae</taxon>
        <taxon>Corynebacterium</taxon>
    </lineage>
</organism>
<feature type="chain" id="PRO_0000131720" description="Protein translocase subunit SecY">
    <location>
        <begin position="1"/>
        <end position="440"/>
    </location>
</feature>
<feature type="transmembrane region" description="Helical" evidence="1">
    <location>
        <begin position="17"/>
        <end position="37"/>
    </location>
</feature>
<feature type="transmembrane region" description="Helical" evidence="1">
    <location>
        <begin position="74"/>
        <end position="94"/>
    </location>
</feature>
<feature type="transmembrane region" description="Helical" evidence="1">
    <location>
        <begin position="116"/>
        <end position="135"/>
    </location>
</feature>
<feature type="transmembrane region" description="Helical" evidence="1">
    <location>
        <begin position="155"/>
        <end position="175"/>
    </location>
</feature>
<feature type="transmembrane region" description="Helical" evidence="1">
    <location>
        <begin position="178"/>
        <end position="198"/>
    </location>
</feature>
<feature type="transmembrane region" description="Helical" evidence="1">
    <location>
        <begin position="213"/>
        <end position="233"/>
    </location>
</feature>
<feature type="transmembrane region" description="Helical" evidence="1">
    <location>
        <begin position="270"/>
        <end position="290"/>
    </location>
</feature>
<feature type="transmembrane region" description="Helical" evidence="1">
    <location>
        <begin position="316"/>
        <end position="336"/>
    </location>
</feature>
<feature type="transmembrane region" description="Helical" evidence="1">
    <location>
        <begin position="374"/>
        <end position="394"/>
    </location>
</feature>
<feature type="transmembrane region" description="Helical" evidence="1">
    <location>
        <begin position="403"/>
        <end position="423"/>
    </location>
</feature>
<keyword id="KW-1003">Cell membrane</keyword>
<keyword id="KW-0472">Membrane</keyword>
<keyword id="KW-0653">Protein transport</keyword>
<keyword id="KW-1185">Reference proteome</keyword>
<keyword id="KW-0811">Translocation</keyword>
<keyword id="KW-0812">Transmembrane</keyword>
<keyword id="KW-1133">Transmembrane helix</keyword>
<keyword id="KW-0813">Transport</keyword>